<protein>
    <recommendedName>
        <fullName evidence="1">DNA-directed RNA polymerase subunit alpha</fullName>
        <shortName evidence="1">PEP</shortName>
        <ecNumber evidence="1">2.7.7.6</ecNumber>
    </recommendedName>
    <alternativeName>
        <fullName evidence="1">Plastid-encoded RNA polymerase subunit alpha</fullName>
        <shortName evidence="1">RNA polymerase subunit alpha</shortName>
    </alternativeName>
</protein>
<evidence type="ECO:0000255" key="1">
    <source>
        <dbReference type="HAMAP-Rule" id="MF_00059"/>
    </source>
</evidence>
<sequence length="339" mass="38929">MVREEVAGSTQTLQWKCVESRVDSKRLYYGRFILSPLRKGQADTVGIALRRALLGEIEGTCITRAKFGSVPHEYSTIAGIEESVQEILLNLKEIVLRSNLYGVRDASICVKGPRYITAQDIILPPSVEIVDTAQPIANLTEPIDFCIDLQIKRDRGYQTELRKNYQDGSYPIDAESMPVRNVNYSIFSCGNGNEKHEILFLEIWTNGSLTPKEALYEASRNLIDLFLPFLHAEEEGTSFEENKNRFTPPLFTFQKRLTNLKKNKKGIPLNCIFIDQLELTSRTYNCLKRANIHTLLDLLSKTEEDLLRIDSFRMEDRKHIWDTLEKHLPIDLLKNKLSF</sequence>
<gene>
    <name evidence="1" type="primary">rpoA</name>
</gene>
<proteinExistence type="inferred from homology"/>
<feature type="chain" id="PRO_0000175454" description="DNA-directed RNA polymerase subunit alpha">
    <location>
        <begin position="1"/>
        <end position="339"/>
    </location>
</feature>
<feature type="region of interest" description="Alpha N-terminal domain (alpha-NTD)" evidence="1">
    <location>
        <begin position="1"/>
        <end position="233"/>
    </location>
</feature>
<feature type="region of interest" description="Alpha C-terminal domain (alpha-CTD)" evidence="1">
    <location>
        <begin position="264"/>
        <end position="339"/>
    </location>
</feature>
<dbReference type="EC" id="2.7.7.6" evidence="1"/>
<dbReference type="EMBL" id="AY115936">
    <property type="protein sequence ID" value="AAM97445.1"/>
    <property type="molecule type" value="Genomic_DNA"/>
</dbReference>
<dbReference type="SMR" id="Q8MAI8"/>
<dbReference type="GO" id="GO:0009507">
    <property type="term" value="C:chloroplast"/>
    <property type="evidence" value="ECO:0007669"/>
    <property type="project" value="UniProtKB-SubCell"/>
</dbReference>
<dbReference type="GO" id="GO:0000428">
    <property type="term" value="C:DNA-directed RNA polymerase complex"/>
    <property type="evidence" value="ECO:0007669"/>
    <property type="project" value="UniProtKB-KW"/>
</dbReference>
<dbReference type="GO" id="GO:0005739">
    <property type="term" value="C:mitochondrion"/>
    <property type="evidence" value="ECO:0007669"/>
    <property type="project" value="GOC"/>
</dbReference>
<dbReference type="GO" id="GO:0003677">
    <property type="term" value="F:DNA binding"/>
    <property type="evidence" value="ECO:0007669"/>
    <property type="project" value="UniProtKB-UniRule"/>
</dbReference>
<dbReference type="GO" id="GO:0003899">
    <property type="term" value="F:DNA-directed RNA polymerase activity"/>
    <property type="evidence" value="ECO:0007669"/>
    <property type="project" value="UniProtKB-UniRule"/>
</dbReference>
<dbReference type="GO" id="GO:0046983">
    <property type="term" value="F:protein dimerization activity"/>
    <property type="evidence" value="ECO:0007669"/>
    <property type="project" value="InterPro"/>
</dbReference>
<dbReference type="GO" id="GO:0006351">
    <property type="term" value="P:DNA-templated transcription"/>
    <property type="evidence" value="ECO:0007669"/>
    <property type="project" value="UniProtKB-UniRule"/>
</dbReference>
<dbReference type="CDD" id="cd06928">
    <property type="entry name" value="RNAP_alpha_NTD"/>
    <property type="match status" value="1"/>
</dbReference>
<dbReference type="FunFam" id="2.170.120.12:FF:000001">
    <property type="entry name" value="DNA-directed RNA polymerase subunit alpha"/>
    <property type="match status" value="1"/>
</dbReference>
<dbReference type="Gene3D" id="1.10.150.20">
    <property type="entry name" value="5' to 3' exonuclease, C-terminal subdomain"/>
    <property type="match status" value="1"/>
</dbReference>
<dbReference type="Gene3D" id="2.170.120.12">
    <property type="entry name" value="DNA-directed RNA polymerase, insert domain"/>
    <property type="match status" value="1"/>
</dbReference>
<dbReference type="Gene3D" id="3.30.1360.10">
    <property type="entry name" value="RNA polymerase, RBP11-like subunit"/>
    <property type="match status" value="1"/>
</dbReference>
<dbReference type="HAMAP" id="MF_00059">
    <property type="entry name" value="RNApol_bact_RpoA"/>
    <property type="match status" value="1"/>
</dbReference>
<dbReference type="InterPro" id="IPR011262">
    <property type="entry name" value="DNA-dir_RNA_pol_insert"/>
</dbReference>
<dbReference type="InterPro" id="IPR011263">
    <property type="entry name" value="DNA-dir_RNA_pol_RpoA/D/Rpb3"/>
</dbReference>
<dbReference type="InterPro" id="IPR011773">
    <property type="entry name" value="DNA-dir_RpoA"/>
</dbReference>
<dbReference type="InterPro" id="IPR036603">
    <property type="entry name" value="RBP11-like"/>
</dbReference>
<dbReference type="InterPro" id="IPR011260">
    <property type="entry name" value="RNAP_asu_C"/>
</dbReference>
<dbReference type="InterPro" id="IPR036643">
    <property type="entry name" value="RNApol_insert_sf"/>
</dbReference>
<dbReference type="NCBIfam" id="TIGR02027">
    <property type="entry name" value="rpoA"/>
    <property type="match status" value="1"/>
</dbReference>
<dbReference type="Pfam" id="PF01000">
    <property type="entry name" value="RNA_pol_A_bac"/>
    <property type="match status" value="1"/>
</dbReference>
<dbReference type="Pfam" id="PF03118">
    <property type="entry name" value="RNA_pol_A_CTD"/>
    <property type="match status" value="1"/>
</dbReference>
<dbReference type="Pfam" id="PF01193">
    <property type="entry name" value="RNA_pol_L"/>
    <property type="match status" value="1"/>
</dbReference>
<dbReference type="SMART" id="SM00662">
    <property type="entry name" value="RPOLD"/>
    <property type="match status" value="1"/>
</dbReference>
<dbReference type="SUPFAM" id="SSF47789">
    <property type="entry name" value="C-terminal domain of RNA polymerase alpha subunit"/>
    <property type="match status" value="1"/>
</dbReference>
<dbReference type="SUPFAM" id="SSF56553">
    <property type="entry name" value="Insert subdomain of RNA polymerase alpha subunit"/>
    <property type="match status" value="1"/>
</dbReference>
<dbReference type="SUPFAM" id="SSF55257">
    <property type="entry name" value="RBP11-like subunits of RNA polymerase"/>
    <property type="match status" value="1"/>
</dbReference>
<name>RPOA_ELYHY</name>
<keyword id="KW-0150">Chloroplast</keyword>
<keyword id="KW-0240">DNA-directed RNA polymerase</keyword>
<keyword id="KW-0548">Nucleotidyltransferase</keyword>
<keyword id="KW-0934">Plastid</keyword>
<keyword id="KW-0804">Transcription</keyword>
<keyword id="KW-0808">Transferase</keyword>
<accession>Q8MAI8</accession>
<comment type="function">
    <text evidence="1">DNA-dependent RNA polymerase catalyzes the transcription of DNA into RNA using the four ribonucleoside triphosphates as substrates.</text>
</comment>
<comment type="catalytic activity">
    <reaction evidence="1">
        <text>RNA(n) + a ribonucleoside 5'-triphosphate = RNA(n+1) + diphosphate</text>
        <dbReference type="Rhea" id="RHEA:21248"/>
        <dbReference type="Rhea" id="RHEA-COMP:14527"/>
        <dbReference type="Rhea" id="RHEA-COMP:17342"/>
        <dbReference type="ChEBI" id="CHEBI:33019"/>
        <dbReference type="ChEBI" id="CHEBI:61557"/>
        <dbReference type="ChEBI" id="CHEBI:140395"/>
        <dbReference type="EC" id="2.7.7.6"/>
    </reaction>
</comment>
<comment type="subunit">
    <text evidence="1">In plastids the minimal PEP RNA polymerase catalytic core is composed of four subunits: alpha, beta, beta', and beta''. When a (nuclear-encoded) sigma factor is associated with the core the holoenzyme is formed, which can initiate transcription.</text>
</comment>
<comment type="subcellular location">
    <subcellularLocation>
        <location>Plastid</location>
        <location>Chloroplast</location>
    </subcellularLocation>
</comment>
<comment type="domain">
    <text evidence="1">The N-terminal domain is essential for RNAP assembly and basal transcription, whereas the C-terminal domain is involved in interaction with transcriptional regulators and with upstream promoter elements.</text>
</comment>
<comment type="similarity">
    <text evidence="1">Belongs to the RNA polymerase alpha chain family.</text>
</comment>
<geneLocation type="chloroplast"/>
<reference key="1">
    <citation type="journal article" date="2002" name="Genome">
        <title>Phylogenetic analysis of North American Elymus and the monogenomic Triticeae (Poaceae) using three chloroplast DNA data sets.</title>
        <authorList>
            <person name="Mason-Gamer R.J."/>
            <person name="Orme N.L."/>
            <person name="Anderson C.M."/>
        </authorList>
    </citation>
    <scope>NUCLEOTIDE SEQUENCE [GENOMIC DNA]</scope>
    <source>
        <strain>Barkworth97-87</strain>
    </source>
</reference>
<organism>
    <name type="scientific">Elymus hystrix</name>
    <name type="common">Eastern bottlebrush grass</name>
    <name type="synonym">Hystrix patula</name>
    <dbReference type="NCBI Taxonomy" id="145781"/>
    <lineage>
        <taxon>Eukaryota</taxon>
        <taxon>Viridiplantae</taxon>
        <taxon>Streptophyta</taxon>
        <taxon>Embryophyta</taxon>
        <taxon>Tracheophyta</taxon>
        <taxon>Spermatophyta</taxon>
        <taxon>Magnoliopsida</taxon>
        <taxon>Liliopsida</taxon>
        <taxon>Poales</taxon>
        <taxon>Poaceae</taxon>
        <taxon>BOP clade</taxon>
        <taxon>Pooideae</taxon>
        <taxon>Triticodae</taxon>
        <taxon>Triticeae</taxon>
        <taxon>Hordeinae</taxon>
        <taxon>Elymus</taxon>
    </lineage>
</organism>